<keyword id="KW-0186">Copper</keyword>
<keyword id="KW-1015">Disulfide bond</keyword>
<keyword id="KW-0325">Glycoprotein</keyword>
<keyword id="KW-0456">Lyase</keyword>
<keyword id="KW-0479">Metal-binding</keyword>
<keyword id="KW-0503">Monooxygenase</keyword>
<keyword id="KW-0511">Multifunctional enzyme</keyword>
<keyword id="KW-0560">Oxidoreductase</keyword>
<keyword id="KW-1185">Reference proteome</keyword>
<keyword id="KW-0677">Repeat</keyword>
<keyword id="KW-0964">Secreted</keyword>
<keyword id="KW-0732">Signal</keyword>
<keyword id="KW-0862">Zinc</keyword>
<dbReference type="EC" id="1.14.17.3"/>
<dbReference type="EC" id="4.3.2.5"/>
<dbReference type="EMBL" id="FO080338">
    <property type="protein sequence ID" value="CCD62973.1"/>
    <property type="molecule type" value="Genomic_DNA"/>
</dbReference>
<dbReference type="PIR" id="T25895">
    <property type="entry name" value="T25895"/>
</dbReference>
<dbReference type="RefSeq" id="NP_001367424.1">
    <property type="nucleotide sequence ID" value="NM_001380351.3"/>
</dbReference>
<dbReference type="RefSeq" id="NP_491666.2">
    <property type="nucleotide sequence ID" value="NM_059265.5"/>
</dbReference>
<dbReference type="SMR" id="P83388"/>
<dbReference type="FunCoup" id="P83388">
    <property type="interactions" value="486"/>
</dbReference>
<dbReference type="STRING" id="6239.T19B4.1.1"/>
<dbReference type="GlyCosmos" id="P83388">
    <property type="glycosylation" value="3 sites, No reported glycans"/>
</dbReference>
<dbReference type="iPTMnet" id="P83388"/>
<dbReference type="PaxDb" id="6239-T19B4.1"/>
<dbReference type="PeptideAtlas" id="P83388"/>
<dbReference type="EnsemblMetazoa" id="T19B4.1.1">
    <property type="protein sequence ID" value="T19B4.1.1"/>
    <property type="gene ID" value="WBGene00020556"/>
</dbReference>
<dbReference type="GeneID" id="266833"/>
<dbReference type="UCSC" id="T19B4.1">
    <property type="organism name" value="c. elegans"/>
</dbReference>
<dbReference type="AGR" id="WB:WBGene00020556"/>
<dbReference type="WormBase" id="T19B4.1">
    <property type="protein sequence ID" value="CE39282"/>
    <property type="gene ID" value="WBGene00020556"/>
    <property type="gene designation" value="pamn-1"/>
</dbReference>
<dbReference type="eggNOG" id="KOG3567">
    <property type="taxonomic scope" value="Eukaryota"/>
</dbReference>
<dbReference type="HOGENOM" id="CLU_012293_1_0_1"/>
<dbReference type="InParanoid" id="P83388"/>
<dbReference type="OMA" id="EHHAHQS"/>
<dbReference type="OrthoDB" id="10044505at2759"/>
<dbReference type="PhylomeDB" id="P83388"/>
<dbReference type="PRO" id="PR:P83388"/>
<dbReference type="Proteomes" id="UP000001940">
    <property type="component" value="Chromosome I"/>
</dbReference>
<dbReference type="Bgee" id="WBGene00020556">
    <property type="expression patterns" value="Expressed in pharyngeal muscle cell (C elegans) and 3 other cell types or tissues"/>
</dbReference>
<dbReference type="GO" id="GO:0005576">
    <property type="term" value="C:extracellular region"/>
    <property type="evidence" value="ECO:0000318"/>
    <property type="project" value="GO_Central"/>
</dbReference>
<dbReference type="GO" id="GO:0016020">
    <property type="term" value="C:membrane"/>
    <property type="evidence" value="ECO:0007669"/>
    <property type="project" value="InterPro"/>
</dbReference>
<dbReference type="GO" id="GO:0005507">
    <property type="term" value="F:copper ion binding"/>
    <property type="evidence" value="ECO:0007669"/>
    <property type="project" value="InterPro"/>
</dbReference>
<dbReference type="GO" id="GO:0004598">
    <property type="term" value="F:peptidylamidoglycolate lyase activity"/>
    <property type="evidence" value="ECO:0007669"/>
    <property type="project" value="UniProtKB-EC"/>
</dbReference>
<dbReference type="GO" id="GO:0004504">
    <property type="term" value="F:peptidylglycine monooxygenase activity"/>
    <property type="evidence" value="ECO:0007669"/>
    <property type="project" value="UniProtKB-EC"/>
</dbReference>
<dbReference type="GO" id="GO:0006518">
    <property type="term" value="P:peptide metabolic process"/>
    <property type="evidence" value="ECO:0007669"/>
    <property type="project" value="InterPro"/>
</dbReference>
<dbReference type="CDD" id="cd14958">
    <property type="entry name" value="NHL_PAL_like"/>
    <property type="match status" value="1"/>
</dbReference>
<dbReference type="FunFam" id="2.120.10.30:FF:000083">
    <property type="entry name" value="Peptidyl-glycine alpha-amidating monooxygenase B"/>
    <property type="match status" value="1"/>
</dbReference>
<dbReference type="FunFam" id="2.60.120.230:FF:000003">
    <property type="entry name" value="Probable peptidyl-glycine alpha-amidating monooxygenase pamn-1"/>
    <property type="match status" value="1"/>
</dbReference>
<dbReference type="FunFam" id="2.60.120.310:FF:000008">
    <property type="entry name" value="Probable peptidyl-glycine alpha-amidating monooxygenase pamn-1"/>
    <property type="match status" value="1"/>
</dbReference>
<dbReference type="Gene3D" id="2.60.120.230">
    <property type="match status" value="1"/>
</dbReference>
<dbReference type="Gene3D" id="2.60.120.310">
    <property type="entry name" value="Copper type II, ascorbate-dependent monooxygenase, N-terminal domain"/>
    <property type="match status" value="1"/>
</dbReference>
<dbReference type="Gene3D" id="2.120.10.30">
    <property type="entry name" value="TolB, C-terminal domain"/>
    <property type="match status" value="1"/>
</dbReference>
<dbReference type="InterPro" id="IPR011042">
    <property type="entry name" value="6-blade_b-propeller_TolB-like"/>
</dbReference>
<dbReference type="InterPro" id="IPR014784">
    <property type="entry name" value="Cu2_ascorb_mOase-like_C"/>
</dbReference>
<dbReference type="InterPro" id="IPR014783">
    <property type="entry name" value="Cu2_ascorb_mOase_CS-2"/>
</dbReference>
<dbReference type="InterPro" id="IPR000323">
    <property type="entry name" value="Cu2_ascorb_mOase_N"/>
</dbReference>
<dbReference type="InterPro" id="IPR036939">
    <property type="entry name" value="Cu2_ascorb_mOase_N_sf"/>
</dbReference>
<dbReference type="InterPro" id="IPR024548">
    <property type="entry name" value="Cu2_monoox_C"/>
</dbReference>
<dbReference type="InterPro" id="IPR001258">
    <property type="entry name" value="NHL_repeat"/>
</dbReference>
<dbReference type="InterPro" id="IPR000720">
    <property type="entry name" value="PHM/PAL"/>
</dbReference>
<dbReference type="InterPro" id="IPR008977">
    <property type="entry name" value="PHM/PNGase_F_dom_sf"/>
</dbReference>
<dbReference type="PANTHER" id="PTHR10680">
    <property type="entry name" value="PEPTIDYL-GLYCINE ALPHA-AMIDATING MONOOXYGENASE"/>
    <property type="match status" value="1"/>
</dbReference>
<dbReference type="PANTHER" id="PTHR10680:SF14">
    <property type="entry name" value="PEPTIDYL-GLYCINE ALPHA-AMIDATING MONOOXYGENASE"/>
    <property type="match status" value="1"/>
</dbReference>
<dbReference type="Pfam" id="PF03712">
    <property type="entry name" value="Cu2_monoox_C"/>
    <property type="match status" value="1"/>
</dbReference>
<dbReference type="Pfam" id="PF01082">
    <property type="entry name" value="Cu2_monooxygen"/>
    <property type="match status" value="1"/>
</dbReference>
<dbReference type="Pfam" id="PF01436">
    <property type="entry name" value="NHL"/>
    <property type="match status" value="2"/>
</dbReference>
<dbReference type="PRINTS" id="PR00790">
    <property type="entry name" value="PAMONOXGNASE"/>
</dbReference>
<dbReference type="SUPFAM" id="SSF101898">
    <property type="entry name" value="NHL repeat"/>
    <property type="match status" value="1"/>
</dbReference>
<dbReference type="SUPFAM" id="SSF49742">
    <property type="entry name" value="PHM/PNGase F"/>
    <property type="match status" value="2"/>
</dbReference>
<dbReference type="PROSITE" id="PS00085">
    <property type="entry name" value="CU2_MONOOXYGENASE_2"/>
    <property type="match status" value="1"/>
</dbReference>
<dbReference type="PROSITE" id="PS51125">
    <property type="entry name" value="NHL"/>
    <property type="match status" value="3"/>
</dbReference>
<sequence length="663" mass="74096">MNDRISINLIYLVLTFCCVSAATVRTAKNDDIQKFTIQMIGYSPQKTDDYVAVSIEATPGYVVAFEPMAHADRVHHMLLYGCTMPASEQGFWRGMETCGWGGGSYILYAWARNAPNLVLPKDVAFSVGHEQDGIKYFVLQVHYAQPFAGEVHDFSGVTMHISQKKPMNLAAVMLFVSGTPIPPQLPAFQNNITCMFESSTPIHPFAFRTHTHAMGRLVSAFFKHDGHWTKIGKRNPQWPQLFEGIPSKLMIGSGDQMSASCRFDSMDKNRTVNMGAMGVDEMCNFYMMFHYDAKLDNPYPQGAICAKDYPSKMIDYPKDGFELLPSRPELEHHAHQSKVPFGIVQEAIHENLGGVKLGQVAGLAFNNEQQLLVFQRAGRVWDASTFDNYNILLDKKPIADPVILVISYSGNQTKLERKLGGGQFYLPHGIYVDKDGFVYTTDVGSHTVAKWKIEGNELKNIWTSGELLMPGSDQHHYCKPTGITRVEDQLYVTDGYCNSRVVVLDLNGKRIRQFGLPGEDAGQFNLPHDIVSDSAGRLLVTDRENGRVQHMTTQGHVIEEFKSTMFTNIYSAASHEDYVFMVPGRPIMGHETEGIAVFVGRSGTGLIEYAFGPTTKGKREQMGPQFGQPHCLRVCPDGGHIFVGDIAEGKARLWQFKIRHDQN</sequence>
<gene>
    <name evidence="7" type="primary">pamn-1</name>
    <name evidence="7" type="ORF">T19B4.1</name>
</gene>
<evidence type="ECO:0000250" key="1"/>
<evidence type="ECO:0000250" key="2">
    <source>
        <dbReference type="UniProtKB" id="P14925"/>
    </source>
</evidence>
<evidence type="ECO:0000255" key="3"/>
<evidence type="ECO:0000269" key="4">
    <source>
    </source>
</evidence>
<evidence type="ECO:0000269" key="5">
    <source>
    </source>
</evidence>
<evidence type="ECO:0000305" key="6"/>
<evidence type="ECO:0000312" key="7">
    <source>
        <dbReference type="WormBase" id="T19B4.1"/>
    </source>
</evidence>
<reference key="1">
    <citation type="journal article" date="1998" name="Science">
        <title>Genome sequence of the nematode C. elegans: a platform for investigating biology.</title>
        <authorList>
            <consortium name="The C. elegans sequencing consortium"/>
        </authorList>
    </citation>
    <scope>NUCLEOTIDE SEQUENCE [LARGE SCALE GENOMIC DNA]</scope>
    <source>
        <strain>Bristol N2</strain>
    </source>
</reference>
<reference key="2">
    <citation type="journal article" date="2003" name="Nat. Biotechnol.">
        <title>Lectin affinity capture, isotope-coded tagging and mass spectrometry to identify N-linked glycoproteins.</title>
        <authorList>
            <person name="Kaji H."/>
            <person name="Saito H."/>
            <person name="Yamauchi Y."/>
            <person name="Shinkawa T."/>
            <person name="Taoka M."/>
            <person name="Hirabayashi J."/>
            <person name="Kasai K."/>
            <person name="Takahashi N."/>
            <person name="Isobe T."/>
        </authorList>
    </citation>
    <scope>GLYCOSYLATION [LARGE SCALE ANALYSIS] AT ASN-411</scope>
    <scope>IDENTIFICATION BY MASS SPECTROMETRY</scope>
    <source>
        <strain>Bristol N2</strain>
    </source>
</reference>
<reference key="3">
    <citation type="journal article" date="2007" name="Mol. Cell. Proteomics">
        <title>Proteomics reveals N-linked glycoprotein diversity in Caenorhabditis elegans and suggests an atypical translocation mechanism for integral membrane proteins.</title>
        <authorList>
            <person name="Kaji H."/>
            <person name="Kamiie J."/>
            <person name="Kawakami H."/>
            <person name="Kido K."/>
            <person name="Yamauchi Y."/>
            <person name="Shinkawa T."/>
            <person name="Taoka M."/>
            <person name="Takahashi N."/>
            <person name="Isobe T."/>
        </authorList>
    </citation>
    <scope>GLYCOSYLATION [LARGE SCALE ANALYSIS] AT ASN-411</scope>
    <scope>IDENTIFICATION BY MASS SPECTROMETRY</scope>
    <source>
        <strain>Bristol N2</strain>
    </source>
</reference>
<organism>
    <name type="scientific">Caenorhabditis elegans</name>
    <dbReference type="NCBI Taxonomy" id="6239"/>
    <lineage>
        <taxon>Eukaryota</taxon>
        <taxon>Metazoa</taxon>
        <taxon>Ecdysozoa</taxon>
        <taxon>Nematoda</taxon>
        <taxon>Chromadorea</taxon>
        <taxon>Rhabditida</taxon>
        <taxon>Rhabditina</taxon>
        <taxon>Rhabditomorpha</taxon>
        <taxon>Rhabditoidea</taxon>
        <taxon>Rhabditidae</taxon>
        <taxon>Peloderinae</taxon>
        <taxon>Caenorhabditis</taxon>
    </lineage>
</organism>
<protein>
    <recommendedName>
        <fullName evidence="6">Probable peptidyl-glycine alpha-amidating monooxygenase pamn-1</fullName>
        <shortName>PAM</shortName>
    </recommendedName>
    <domain>
        <recommendedName>
            <fullName>Probable peptidylglycine alpha-hydroxylating monooxygenase</fullName>
            <shortName>PHM</shortName>
            <ecNumber>1.14.17.3</ecNumber>
        </recommendedName>
    </domain>
    <domain>
        <recommendedName>
            <fullName>Probable peptidyl-alpha-hydroxyglycine alpha-amidating lyase</fullName>
            <ecNumber>4.3.2.5</ecNumber>
        </recommendedName>
        <alternativeName>
            <fullName>Peptidylamidoglycolate lyase</fullName>
            <shortName>PAL</shortName>
        </alternativeName>
    </domain>
</protein>
<name>AMDL_CAEEL</name>
<accession>P83388</accession>
<accession>P91458</accession>
<proteinExistence type="evidence at protein level"/>
<comment type="function">
    <text>Probable bifunctional enzyme that catalyzes 2 sequential steps in C-terminal alpha-amidation of peptides. The monooxygenase part produces an unstable peptidyl(2-hydroxyglycine) intermediate that is dismutated to glyoxylate and the corresponding desglycine peptide amide by the lyase part. C-terminal amidation of peptides such as neuropeptides is essential for full biological activity.</text>
</comment>
<comment type="catalytic activity">
    <reaction>
        <text>a [peptide]-C-terminal glycine + 2 L-ascorbate + O2 = a [peptide]-C-terminal (2S)-2-hydroxyglycine + 2 monodehydro-L-ascorbate radical + H2O</text>
        <dbReference type="Rhea" id="RHEA:21452"/>
        <dbReference type="Rhea" id="RHEA-COMP:13486"/>
        <dbReference type="Rhea" id="RHEA-COMP:15321"/>
        <dbReference type="ChEBI" id="CHEBI:15377"/>
        <dbReference type="ChEBI" id="CHEBI:15379"/>
        <dbReference type="ChEBI" id="CHEBI:38290"/>
        <dbReference type="ChEBI" id="CHEBI:59513"/>
        <dbReference type="ChEBI" id="CHEBI:137000"/>
        <dbReference type="ChEBI" id="CHEBI:142768"/>
        <dbReference type="EC" id="1.14.17.3"/>
    </reaction>
</comment>
<comment type="catalytic activity">
    <reaction>
        <text>a [peptide]-C-terminal (2S)-2-hydroxyglycine = a [peptide]-C-terminal amide + glyoxylate</text>
        <dbReference type="Rhea" id="RHEA:20924"/>
        <dbReference type="Rhea" id="RHEA-COMP:13485"/>
        <dbReference type="Rhea" id="RHEA-COMP:15321"/>
        <dbReference type="ChEBI" id="CHEBI:36655"/>
        <dbReference type="ChEBI" id="CHEBI:137001"/>
        <dbReference type="ChEBI" id="CHEBI:142768"/>
        <dbReference type="EC" id="4.3.2.5"/>
    </reaction>
</comment>
<comment type="cofactor">
    <cofactor evidence="1">
        <name>Zn(2+)</name>
        <dbReference type="ChEBI" id="CHEBI:29105"/>
    </cofactor>
    <text evidence="1">Zn(2+) is required for the lyase reaction.</text>
</comment>
<comment type="cofactor">
    <cofactor evidence="1">
        <name>Cu(2+)</name>
        <dbReference type="ChEBI" id="CHEBI:29036"/>
    </cofactor>
    <text evidence="1">Binds 2 copper ions per subunit for the monooxygenase reaction.</text>
</comment>
<comment type="subunit">
    <text evidence="1">Monomer.</text>
</comment>
<comment type="subcellular location">
    <subcellularLocation>
        <location evidence="6">Secreted</location>
    </subcellularLocation>
</comment>
<comment type="similarity">
    <text evidence="6">In the C-terminal section; belongs to the peptidyl-alpha-hydroxyglycine alpha-amidating lyase family.</text>
</comment>
<comment type="similarity">
    <text evidence="6">In the N-terminal section; belongs to the copper type II ascorbate-dependent monooxygenase family.</text>
</comment>
<feature type="signal peptide" evidence="3">
    <location>
        <begin position="1"/>
        <end position="21"/>
    </location>
</feature>
<feature type="chain" id="PRO_0000248569" description="Probable peptidyl-glycine alpha-amidating monooxygenase pamn-1" evidence="6">
    <location>
        <begin position="22"/>
        <end position="663"/>
    </location>
</feature>
<feature type="repeat" description="NHL 1">
    <location>
        <begin position="411"/>
        <end position="454"/>
    </location>
</feature>
<feature type="repeat" description="NHL 2">
    <location>
        <begin position="464"/>
        <end position="507"/>
    </location>
</feature>
<feature type="repeat" description="NHL 3">
    <location>
        <begin position="511"/>
        <end position="554"/>
    </location>
</feature>
<feature type="repeat" description="NHL 4">
    <location>
        <begin position="626"/>
        <end position="656"/>
    </location>
</feature>
<feature type="region of interest" description="Peptidylglycine alpha-hydroxylating monooxygenase">
    <location>
        <begin position="1"/>
        <end position="300"/>
    </location>
</feature>
<feature type="region of interest" description="Peptidyl-alpha-hydroxyglycine alpha-amidating lyase">
    <location>
        <begin position="301"/>
        <end position="663"/>
    </location>
</feature>
<feature type="binding site" evidence="2">
    <location>
        <position position="75"/>
    </location>
    <ligand>
        <name>Cu(2+)</name>
        <dbReference type="ChEBI" id="CHEBI:29036"/>
        <label>A</label>
    </ligand>
</feature>
<feature type="binding site" evidence="2">
    <location>
        <position position="76"/>
    </location>
    <ligand>
        <name>Cu(2+)</name>
        <dbReference type="ChEBI" id="CHEBI:29036"/>
        <label>A</label>
    </ligand>
</feature>
<feature type="binding site" evidence="2">
    <location>
        <position position="142"/>
    </location>
    <ligand>
        <name>Cu(2+)</name>
        <dbReference type="ChEBI" id="CHEBI:29036"/>
        <label>A</label>
    </ligand>
</feature>
<feature type="binding site" evidence="2">
    <location>
        <position position="210"/>
    </location>
    <ligand>
        <name>Cu(2+)</name>
        <dbReference type="ChEBI" id="CHEBI:29036"/>
        <label>B</label>
    </ligand>
</feature>
<feature type="binding site" evidence="2">
    <location>
        <position position="212"/>
    </location>
    <ligand>
        <name>Cu(2+)</name>
        <dbReference type="ChEBI" id="CHEBI:29036"/>
        <label>B</label>
    </ligand>
</feature>
<feature type="binding site" evidence="2">
    <location>
        <position position="282"/>
    </location>
    <ligand>
        <name>Cu(2+)</name>
        <dbReference type="ChEBI" id="CHEBI:29036"/>
        <label>B</label>
    </ligand>
</feature>
<feature type="binding site" evidence="2">
    <location>
        <position position="376"/>
    </location>
    <ligand>
        <name>a protein</name>
        <dbReference type="ChEBI" id="CHEBI:16541"/>
    </ligand>
    <ligandPart>
        <name>C-terminal Xaa-(2S)-2-hydroxyglycine residue</name>
        <dbReference type="ChEBI" id="CHEBI:142768"/>
    </ligandPart>
</feature>
<feature type="binding site" evidence="2">
    <location>
        <position position="496"/>
    </location>
    <ligand>
        <name>a protein</name>
        <dbReference type="ChEBI" id="CHEBI:16541"/>
    </ligand>
    <ligandPart>
        <name>C-terminal Xaa-(2S)-2-hydroxyglycine residue</name>
        <dbReference type="ChEBI" id="CHEBI:142768"/>
    </ligandPart>
</feature>
<feature type="binding site" evidence="2">
    <location>
        <position position="543"/>
    </location>
    <ligand>
        <name>a protein</name>
        <dbReference type="ChEBI" id="CHEBI:16541"/>
    </ligand>
    <ligandPart>
        <name>C-terminal Xaa-(2S)-2-hydroxyglycine residue</name>
        <dbReference type="ChEBI" id="CHEBI:142768"/>
    </ligandPart>
</feature>
<feature type="glycosylation site" description="N-linked (GlcNAc...) asparagine" evidence="3">
    <location>
        <position position="191"/>
    </location>
</feature>
<feature type="glycosylation site" description="N-linked (GlcNAc...) asparagine" evidence="3">
    <location>
        <position position="269"/>
    </location>
</feature>
<feature type="glycosylation site" description="N-linked (GlcNAc...) asparagine" evidence="4 5">
    <location>
        <position position="411"/>
    </location>
</feature>
<feature type="disulfide bond" evidence="2">
    <location>
        <begin position="82"/>
        <end position="98"/>
    </location>
</feature>
<feature type="disulfide bond" evidence="2">
    <location>
        <begin position="194"/>
        <end position="305"/>
    </location>
</feature>
<feature type="disulfide bond" evidence="2">
    <location>
        <begin position="261"/>
        <end position="283"/>
    </location>
</feature>
<feature type="disulfide bond" evidence="2">
    <location>
        <begin position="478"/>
        <end position="497"/>
    </location>
</feature>